<reference key="1">
    <citation type="journal article" date="2004" name="Nucleic Acids Res.">
        <title>Whole genome comparisons of serotype 4b and 1/2a strains of the food-borne pathogen Listeria monocytogenes reveal new insights into the core genome components of this species.</title>
        <authorList>
            <person name="Nelson K.E."/>
            <person name="Fouts D.E."/>
            <person name="Mongodin E.F."/>
            <person name="Ravel J."/>
            <person name="DeBoy R.T."/>
            <person name="Kolonay J.F."/>
            <person name="Rasko D.A."/>
            <person name="Angiuoli S.V."/>
            <person name="Gill S.R."/>
            <person name="Paulsen I.T."/>
            <person name="Peterson J.D."/>
            <person name="White O."/>
            <person name="Nelson W.C."/>
            <person name="Nierman W.C."/>
            <person name="Beanan M.J."/>
            <person name="Brinkac L.M."/>
            <person name="Daugherty S.C."/>
            <person name="Dodson R.J."/>
            <person name="Durkin A.S."/>
            <person name="Madupu R."/>
            <person name="Haft D.H."/>
            <person name="Selengut J."/>
            <person name="Van Aken S.E."/>
            <person name="Khouri H.M."/>
            <person name="Fedorova N."/>
            <person name="Forberger H.A."/>
            <person name="Tran B."/>
            <person name="Kathariou S."/>
            <person name="Wonderling L.D."/>
            <person name="Uhlich G.A."/>
            <person name="Bayles D.O."/>
            <person name="Luchansky J.B."/>
            <person name="Fraser C.M."/>
        </authorList>
    </citation>
    <scope>NUCLEOTIDE SEQUENCE [LARGE SCALE GENOMIC DNA]</scope>
    <source>
        <strain>F2365</strain>
    </source>
</reference>
<proteinExistence type="inferred from homology"/>
<dbReference type="EC" id="4.2.1.59" evidence="1"/>
<dbReference type="EMBL" id="AE017262">
    <property type="protein sequence ID" value="AAT05262.1"/>
    <property type="molecule type" value="Genomic_DNA"/>
</dbReference>
<dbReference type="RefSeq" id="WP_003723457.1">
    <property type="nucleotide sequence ID" value="NC_002973.6"/>
</dbReference>
<dbReference type="SMR" id="Q71WQ4"/>
<dbReference type="GeneID" id="93240392"/>
<dbReference type="KEGG" id="lmf:LMOf2365_2497"/>
<dbReference type="HOGENOM" id="CLU_078912_3_0_9"/>
<dbReference type="GO" id="GO:0005737">
    <property type="term" value="C:cytoplasm"/>
    <property type="evidence" value="ECO:0007669"/>
    <property type="project" value="UniProtKB-SubCell"/>
</dbReference>
<dbReference type="GO" id="GO:0016020">
    <property type="term" value="C:membrane"/>
    <property type="evidence" value="ECO:0007669"/>
    <property type="project" value="GOC"/>
</dbReference>
<dbReference type="GO" id="GO:0019171">
    <property type="term" value="F:(3R)-hydroxyacyl-[acyl-carrier-protein] dehydratase activity"/>
    <property type="evidence" value="ECO:0007669"/>
    <property type="project" value="UniProtKB-EC"/>
</dbReference>
<dbReference type="GO" id="GO:0006633">
    <property type="term" value="P:fatty acid biosynthetic process"/>
    <property type="evidence" value="ECO:0007669"/>
    <property type="project" value="UniProtKB-UniRule"/>
</dbReference>
<dbReference type="GO" id="GO:0009245">
    <property type="term" value="P:lipid A biosynthetic process"/>
    <property type="evidence" value="ECO:0007669"/>
    <property type="project" value="UniProtKB-UniRule"/>
</dbReference>
<dbReference type="CDD" id="cd01288">
    <property type="entry name" value="FabZ"/>
    <property type="match status" value="1"/>
</dbReference>
<dbReference type="FunFam" id="3.10.129.10:FF:000001">
    <property type="entry name" value="3-hydroxyacyl-[acyl-carrier-protein] dehydratase FabZ"/>
    <property type="match status" value="1"/>
</dbReference>
<dbReference type="Gene3D" id="3.10.129.10">
    <property type="entry name" value="Hotdog Thioesterase"/>
    <property type="match status" value="1"/>
</dbReference>
<dbReference type="HAMAP" id="MF_00406">
    <property type="entry name" value="FabZ"/>
    <property type="match status" value="1"/>
</dbReference>
<dbReference type="InterPro" id="IPR013114">
    <property type="entry name" value="FabA_FabZ"/>
</dbReference>
<dbReference type="InterPro" id="IPR010084">
    <property type="entry name" value="FabZ"/>
</dbReference>
<dbReference type="InterPro" id="IPR029069">
    <property type="entry name" value="HotDog_dom_sf"/>
</dbReference>
<dbReference type="NCBIfam" id="TIGR01750">
    <property type="entry name" value="fabZ"/>
    <property type="match status" value="1"/>
</dbReference>
<dbReference type="NCBIfam" id="NF000582">
    <property type="entry name" value="PRK00006.1"/>
    <property type="match status" value="1"/>
</dbReference>
<dbReference type="PANTHER" id="PTHR30272">
    <property type="entry name" value="3-HYDROXYACYL-[ACYL-CARRIER-PROTEIN] DEHYDRATASE"/>
    <property type="match status" value="1"/>
</dbReference>
<dbReference type="PANTHER" id="PTHR30272:SF1">
    <property type="entry name" value="3-HYDROXYACYL-[ACYL-CARRIER-PROTEIN] DEHYDRATASE"/>
    <property type="match status" value="1"/>
</dbReference>
<dbReference type="Pfam" id="PF07977">
    <property type="entry name" value="FabA"/>
    <property type="match status" value="1"/>
</dbReference>
<dbReference type="SUPFAM" id="SSF54637">
    <property type="entry name" value="Thioesterase/thiol ester dehydrase-isomerase"/>
    <property type="match status" value="1"/>
</dbReference>
<sequence>MLDIKKIKEILPHRYPFLLVDRVISVEEGKKVTAIKNVTANEEFFNGHFPEYPVMPGVLIVEALAQTSGIAMMQSEANKGKIGLFAGIDGCRFKRQVVPGDQLLLEAEITRMRGAIAKAKVKATVEGDLVCEAEIMFALSDLPK</sequence>
<name>FABZ_LISMF</name>
<gene>
    <name evidence="1" type="primary">fabZ</name>
    <name type="ordered locus">LMOf2365_2497</name>
</gene>
<feature type="chain" id="PRO_0000091698" description="3-hydroxyacyl-[acyl-carrier-protein] dehydratase FabZ">
    <location>
        <begin position="1"/>
        <end position="144"/>
    </location>
</feature>
<feature type="active site" evidence="1">
    <location>
        <position position="48"/>
    </location>
</feature>
<protein>
    <recommendedName>
        <fullName evidence="1">3-hydroxyacyl-[acyl-carrier-protein] dehydratase FabZ</fullName>
        <ecNumber evidence="1">4.2.1.59</ecNumber>
    </recommendedName>
    <alternativeName>
        <fullName evidence="1">(3R)-hydroxymyristoyl-[acyl-carrier-protein] dehydratase</fullName>
        <shortName evidence="1">(3R)-hydroxymyristoyl-ACP dehydrase</shortName>
    </alternativeName>
    <alternativeName>
        <fullName evidence="1">Beta-hydroxyacyl-ACP dehydratase</fullName>
    </alternativeName>
</protein>
<accession>Q71WQ4</accession>
<comment type="function">
    <text evidence="1">Involved in unsaturated fatty acids biosynthesis. Catalyzes the dehydration of short chain beta-hydroxyacyl-ACPs and long chain saturated and unsaturated beta-hydroxyacyl-ACPs.</text>
</comment>
<comment type="catalytic activity">
    <reaction evidence="1">
        <text>a (3R)-hydroxyacyl-[ACP] = a (2E)-enoyl-[ACP] + H2O</text>
        <dbReference type="Rhea" id="RHEA:13097"/>
        <dbReference type="Rhea" id="RHEA-COMP:9925"/>
        <dbReference type="Rhea" id="RHEA-COMP:9945"/>
        <dbReference type="ChEBI" id="CHEBI:15377"/>
        <dbReference type="ChEBI" id="CHEBI:78784"/>
        <dbReference type="ChEBI" id="CHEBI:78827"/>
        <dbReference type="EC" id="4.2.1.59"/>
    </reaction>
</comment>
<comment type="subcellular location">
    <subcellularLocation>
        <location evidence="1">Cytoplasm</location>
    </subcellularLocation>
</comment>
<comment type="similarity">
    <text evidence="1">Belongs to the thioester dehydratase family. FabZ subfamily.</text>
</comment>
<keyword id="KW-0963">Cytoplasm</keyword>
<keyword id="KW-0441">Lipid A biosynthesis</keyword>
<keyword id="KW-0444">Lipid biosynthesis</keyword>
<keyword id="KW-0443">Lipid metabolism</keyword>
<keyword id="KW-0456">Lyase</keyword>
<evidence type="ECO:0000255" key="1">
    <source>
        <dbReference type="HAMAP-Rule" id="MF_00406"/>
    </source>
</evidence>
<organism>
    <name type="scientific">Listeria monocytogenes serotype 4b (strain F2365)</name>
    <dbReference type="NCBI Taxonomy" id="265669"/>
    <lineage>
        <taxon>Bacteria</taxon>
        <taxon>Bacillati</taxon>
        <taxon>Bacillota</taxon>
        <taxon>Bacilli</taxon>
        <taxon>Bacillales</taxon>
        <taxon>Listeriaceae</taxon>
        <taxon>Listeria</taxon>
    </lineage>
</organism>